<accession>P08588</accession>
<accession>B0LPE2</accession>
<accession>Q5T5Y4</accession>
<accession>Q9UKG7</accession>
<accession>Q9UKG8</accession>
<gene>
    <name evidence="15" type="primary">ADRB1</name>
    <name type="synonym">ADRB1R</name>
    <name type="synonym">B1AR</name>
</gene>
<sequence>MGAGVLVLGASEPGNLSSAAPLPDGAATAARLLVPASPPASLLPPASESPEPLSQQWTAGMGLLMALIVLLIVAGNVLVIVAIAKTPRLQTLTNLFIMSLASADLVMGLLVVPFGATIVVWGRWEYGSFFCELWTSVDVLCVTASIETLCVIALDRYLAITSPFRYQSLLTRARARGLVCTVWAISALVSFLPILMHWWRAESDEARRCYNDPKCCDFVTNRAYAIASSVVSFYVPLCIMAFVYLRVFREAQKQVKKIDSCERRFLGGPARPPSPSPSPVPAPAPPPGPPRPAAAAATAPLANGRAGKRRPSRLVALREQKALKTLGIIMGVFTLCWLPFFLANVVKAFHRELVPDRLFVFFNWLGYANSAFNPIIYCRSPDFRKAFQGLLCCARRAARRRHATHGDRPRASGCLARPGPPPSPGAASDDDDDDVVGATPPARLLEPWAGCNGGAAADSDSSLDEPCRPGFASESKV</sequence>
<organism>
    <name type="scientific">Homo sapiens</name>
    <name type="common">Human</name>
    <dbReference type="NCBI Taxonomy" id="9606"/>
    <lineage>
        <taxon>Eukaryota</taxon>
        <taxon>Metazoa</taxon>
        <taxon>Chordata</taxon>
        <taxon>Craniata</taxon>
        <taxon>Vertebrata</taxon>
        <taxon>Euteleostomi</taxon>
        <taxon>Mammalia</taxon>
        <taxon>Eutheria</taxon>
        <taxon>Euarchontoglires</taxon>
        <taxon>Primates</taxon>
        <taxon>Haplorrhini</taxon>
        <taxon>Catarrhini</taxon>
        <taxon>Hominidae</taxon>
        <taxon>Homo</taxon>
    </lineage>
</organism>
<protein>
    <recommendedName>
        <fullName evidence="14">Beta-1 adrenergic receptor</fullName>
    </recommendedName>
    <alternativeName>
        <fullName>Beta-1 adrenoreceptor</fullName>
        <shortName>Beta-1 adrenoceptor</shortName>
    </alternativeName>
</protein>
<dbReference type="EMBL" id="J03019">
    <property type="protein sequence ID" value="AAA51667.1"/>
    <property type="molecule type" value="mRNA"/>
</dbReference>
<dbReference type="EMBL" id="AF169006">
    <property type="protein sequence ID" value="AAD53696.1"/>
    <property type="molecule type" value="Genomic_DNA"/>
</dbReference>
<dbReference type="EMBL" id="AF169007">
    <property type="protein sequence ID" value="AAD53697.1"/>
    <property type="molecule type" value="Genomic_DNA"/>
</dbReference>
<dbReference type="EMBL" id="AY567837">
    <property type="protein sequence ID" value="AAS66983.1"/>
    <property type="molecule type" value="Genomic_DNA"/>
</dbReference>
<dbReference type="EMBL" id="EU332832">
    <property type="protein sequence ID" value="ABY87521.1"/>
    <property type="molecule type" value="Genomic_DNA"/>
</dbReference>
<dbReference type="EMBL" id="AL355543">
    <property type="status" value="NOT_ANNOTATED_CDS"/>
    <property type="molecule type" value="Genomic_DNA"/>
</dbReference>
<dbReference type="CCDS" id="CCDS7586.1"/>
<dbReference type="PIR" id="A39911">
    <property type="entry name" value="QRHUB1"/>
</dbReference>
<dbReference type="RefSeq" id="NP_000675.1">
    <property type="nucleotide sequence ID" value="NM_000684.3"/>
</dbReference>
<dbReference type="PDB" id="2LSQ">
    <property type="method" value="NMR"/>
    <property type="chains" value="A=197-221"/>
</dbReference>
<dbReference type="PDB" id="7BTS">
    <property type="method" value="X-ray"/>
    <property type="resolution" value="3.13 A"/>
    <property type="chains" value="A=54-399"/>
</dbReference>
<dbReference type="PDB" id="7BU6">
    <property type="method" value="X-ray"/>
    <property type="resolution" value="2.70 A"/>
    <property type="chains" value="A=54-399"/>
</dbReference>
<dbReference type="PDB" id="7BU7">
    <property type="method" value="X-ray"/>
    <property type="resolution" value="2.60 A"/>
    <property type="chains" value="A=54-399"/>
</dbReference>
<dbReference type="PDB" id="7BVQ">
    <property type="method" value="X-ray"/>
    <property type="resolution" value="2.50 A"/>
    <property type="chains" value="A/B=54-399"/>
</dbReference>
<dbReference type="PDBsum" id="2LSQ"/>
<dbReference type="PDBsum" id="7BTS"/>
<dbReference type="PDBsum" id="7BU6"/>
<dbReference type="PDBsum" id="7BU7"/>
<dbReference type="PDBsum" id="7BVQ"/>
<dbReference type="EMDB" id="EMD-40120"/>
<dbReference type="EMDB" id="EMD-40151"/>
<dbReference type="SMR" id="P08588"/>
<dbReference type="BioGRID" id="106662">
    <property type="interactions" value="10"/>
</dbReference>
<dbReference type="CORUM" id="P08588"/>
<dbReference type="DIP" id="DIP-36294N"/>
<dbReference type="FunCoup" id="P08588">
    <property type="interactions" value="1433"/>
</dbReference>
<dbReference type="IntAct" id="P08588">
    <property type="interactions" value="14"/>
</dbReference>
<dbReference type="MINT" id="P08588"/>
<dbReference type="STRING" id="9606.ENSP00000358301"/>
<dbReference type="BindingDB" id="P08588"/>
<dbReference type="ChEMBL" id="CHEMBL213"/>
<dbReference type="DrugBank" id="DB08558">
    <property type="generic name" value="2-HYDROXYMETHYL-6-OCTYLSULFANYL-TETRAHYDRO-PYRAN-3,4,5-TRIOL"/>
</dbReference>
<dbReference type="DrugBank" id="DB08347">
    <property type="generic name" value="4-{[(2S)-3-(tert-butylamino)-2-hydroxypropyl]oxy}-3H-indole-2-carbonitrile"/>
</dbReference>
<dbReference type="DrugBank" id="DB01193">
    <property type="generic name" value="Acebutolol"/>
</dbReference>
<dbReference type="DrugBank" id="DB01001">
    <property type="generic name" value="Albuterol"/>
</dbReference>
<dbReference type="DrugBank" id="DB00866">
    <property type="generic name" value="Alprenolol"/>
</dbReference>
<dbReference type="DrugBank" id="DB01118">
    <property type="generic name" value="Amiodarone"/>
</dbReference>
<dbReference type="DrugBank" id="DB00182">
    <property type="generic name" value="Amphetamine"/>
</dbReference>
<dbReference type="DrugBank" id="DB11785">
    <property type="generic name" value="Anisodamine"/>
</dbReference>
<dbReference type="DrugBank" id="DB01102">
    <property type="generic name" value="Arbutamine"/>
</dbReference>
<dbReference type="DrugBank" id="DB01238">
    <property type="generic name" value="Aripiprazole"/>
</dbReference>
<dbReference type="DrugBank" id="DB09204">
    <property type="generic name" value="Arotinolol"/>
</dbReference>
<dbReference type="DrugBank" id="DB06216">
    <property type="generic name" value="Asenapine"/>
</dbReference>
<dbReference type="DrugBank" id="DB00335">
    <property type="generic name" value="Atenolol"/>
</dbReference>
<dbReference type="DrugBank" id="DB09013">
    <property type="generic name" value="Befunolol"/>
</dbReference>
<dbReference type="DrugBank" id="DB00195">
    <property type="generic name" value="Betaxolol"/>
</dbReference>
<dbReference type="DrugBank" id="DB00217">
    <property type="generic name" value="Bethanidine"/>
</dbReference>
<dbReference type="DrugBank" id="DB01295">
    <property type="generic name" value="Bevantolol"/>
</dbReference>
<dbReference type="DrugBank" id="DB00612">
    <property type="generic name" value="Bisoprolol"/>
</dbReference>
<dbReference type="DrugBank" id="DB08807">
    <property type="generic name" value="Bopindolol"/>
</dbReference>
<dbReference type="DrugBank" id="DB01158">
    <property type="generic name" value="Bretylium"/>
</dbReference>
<dbReference type="DrugBank" id="DB12752">
    <property type="generic name" value="Bucindolol"/>
</dbReference>
<dbReference type="DrugBank" id="DB06726">
    <property type="generic name" value="Bufuralol"/>
</dbReference>
<dbReference type="DrugBank" id="DB08808">
    <property type="generic name" value="Bupranolol"/>
</dbReference>
<dbReference type="DrugBank" id="DB00248">
    <property type="generic name" value="Cabergoline"/>
</dbReference>
<dbReference type="DrugBank" id="DB00521">
    <property type="generic name" value="Carteolol"/>
</dbReference>
<dbReference type="DrugBank" id="DB01136">
    <property type="generic name" value="Carvedilol"/>
</dbReference>
<dbReference type="DrugBank" id="DB04846">
    <property type="generic name" value="Celiprolol"/>
</dbReference>
<dbReference type="DrugBank" id="DB01407">
    <property type="generic name" value="Clenbuterol"/>
</dbReference>
<dbReference type="DrugBank" id="DB00785">
    <property type="generic name" value="Cryptenamine"/>
</dbReference>
<dbReference type="DrugBank" id="DB01151">
    <property type="generic name" value="Desipramine"/>
</dbReference>
<dbReference type="DrugBank" id="DB12803">
    <property type="generic name" value="Dichloroisoproterenol"/>
</dbReference>
<dbReference type="DrugBank" id="DB11273">
    <property type="generic name" value="Dihydroergocornine"/>
</dbReference>
<dbReference type="DrugBank" id="DB13345">
    <property type="generic name" value="Dihydroergocristine"/>
</dbReference>
<dbReference type="DrugBank" id="DB00449">
    <property type="generic name" value="Dipivefrin"/>
</dbReference>
<dbReference type="DrugBank" id="DB11278">
    <property type="generic name" value="DL-Methylephedrine"/>
</dbReference>
<dbReference type="DrugBank" id="DB00841">
    <property type="generic name" value="Dobutamine"/>
</dbReference>
<dbReference type="DrugBank" id="DB04855">
    <property type="generic name" value="Dronedarone"/>
</dbReference>
<dbReference type="DrugBank" id="DB06262">
    <property type="generic name" value="Droxidopa"/>
</dbReference>
<dbReference type="DrugBank" id="DB01363">
    <property type="generic name" value="Ephedra sinica root"/>
</dbReference>
<dbReference type="DrugBank" id="DB01364">
    <property type="generic name" value="Ephedrine"/>
</dbReference>
<dbReference type="DrugBank" id="DB00668">
    <property type="generic name" value="Epinephrine"/>
</dbReference>
<dbReference type="DrugBank" id="DB01049">
    <property type="generic name" value="Ergoloid mesylate"/>
</dbReference>
<dbReference type="DrugBank" id="DB00187">
    <property type="generic name" value="Esmolol"/>
</dbReference>
<dbReference type="DrugBank" id="DB01288">
    <property type="generic name" value="Fenoterol"/>
</dbReference>
<dbReference type="DrugBank" id="DB00983">
    <property type="generic name" value="Formoterol"/>
</dbReference>
<dbReference type="DrugBank" id="DB04946">
    <property type="generic name" value="Iloperidone"/>
</dbReference>
<dbReference type="DrugBank" id="DB00221">
    <property type="generic name" value="Isoetharine"/>
</dbReference>
<dbReference type="DrugBank" id="DB01064">
    <property type="generic name" value="Isoprenaline"/>
</dbReference>
<dbReference type="DrugBank" id="DB00598">
    <property type="generic name" value="Labetalol"/>
</dbReference>
<dbReference type="DrugBank" id="DB00555">
    <property type="generic name" value="Lamotrigine"/>
</dbReference>
<dbReference type="DrugBank" id="DB09351">
    <property type="generic name" value="Levobetaxolol"/>
</dbReference>
<dbReference type="DrugBank" id="DB01210">
    <property type="generic name" value="Levobunolol"/>
</dbReference>
<dbReference type="DrugBank" id="DB00408">
    <property type="generic name" value="Loxapine"/>
</dbReference>
<dbReference type="DrugBank" id="DB01365">
    <property type="generic name" value="Mephentermine"/>
</dbReference>
<dbReference type="DrugBank" id="DB01214">
    <property type="generic name" value="Metipranolol"/>
</dbReference>
<dbReference type="DrugBank" id="DB00264">
    <property type="generic name" value="Metoprolol"/>
</dbReference>
<dbReference type="DrugBank" id="DB08893">
    <property type="generic name" value="Mirabegron"/>
</dbReference>
<dbReference type="DrugBank" id="DB01203">
    <property type="generic name" value="Nadolol"/>
</dbReference>
<dbReference type="DrugBank" id="DB04861">
    <property type="generic name" value="Nebivolol"/>
</dbReference>
<dbReference type="DrugBank" id="DB00368">
    <property type="generic name" value="Norepinephrine"/>
</dbReference>
<dbReference type="DrugBank" id="DB00540">
    <property type="generic name" value="Nortriptyline"/>
</dbReference>
<dbReference type="DrugBank" id="DB00334">
    <property type="generic name" value="Olanzapine"/>
</dbReference>
<dbReference type="DrugBank" id="DB01580">
    <property type="generic name" value="Oxprenolol"/>
</dbReference>
<dbReference type="DrugBank" id="DB00715">
    <property type="generic name" value="Paroxetine"/>
</dbReference>
<dbReference type="DrugBank" id="DB01359">
    <property type="generic name" value="Penbutolol"/>
</dbReference>
<dbReference type="DrugBank" id="DB00397">
    <property type="generic name" value="Phenylpropanolamine"/>
</dbReference>
<dbReference type="DrugBank" id="DB00960">
    <property type="generic name" value="Pindolol"/>
</dbReference>
<dbReference type="DrugBank" id="DB01291">
    <property type="generic name" value="Pirbuterol"/>
</dbReference>
<dbReference type="DrugBank" id="DB01297">
    <property type="generic name" value="Practolol"/>
</dbReference>
<dbReference type="DrugBank" id="DB01182">
    <property type="generic name" value="Propafenone"/>
</dbReference>
<dbReference type="DrugBank" id="DB00571">
    <property type="generic name" value="Propranolol"/>
</dbReference>
<dbReference type="DrugBank" id="DB06814">
    <property type="generic name" value="Protokylol"/>
</dbReference>
<dbReference type="DrugBank" id="DB00852">
    <property type="generic name" value="Pseudoephedrine"/>
</dbReference>
<dbReference type="DrugBank" id="DB01917">
    <property type="generic name" value="Putrescine"/>
</dbReference>
<dbReference type="DrugBank" id="DB06483">
    <property type="generic name" value="PW2101"/>
</dbReference>
<dbReference type="DrugBank" id="DB11124">
    <property type="generic name" value="Racepinephrine"/>
</dbReference>
<dbReference type="DrugBank" id="DB00243">
    <property type="generic name" value="Ranolazine"/>
</dbReference>
<dbReference type="DrugBank" id="DB15949">
    <property type="generic name" value="Raubasine"/>
</dbReference>
<dbReference type="DrugBank" id="DB00867">
    <property type="generic name" value="Ritodrine"/>
</dbReference>
<dbReference type="DrugBank" id="DB00938">
    <property type="generic name" value="Salmeterol"/>
</dbReference>
<dbReference type="DrugBank" id="DB00489">
    <property type="generic name" value="Sotalol"/>
</dbReference>
<dbReference type="DrugBank" id="DB03566">
    <property type="generic name" value="Spermidine"/>
</dbReference>
<dbReference type="DrugBank" id="DB00127">
    <property type="generic name" value="Spermine"/>
</dbReference>
<dbReference type="DrugBank" id="DB00871">
    <property type="generic name" value="Terbutaline"/>
</dbReference>
<dbReference type="DrugBank" id="DB00373">
    <property type="generic name" value="Timolol"/>
</dbReference>
<dbReference type="DrugBank" id="DB00726">
    <property type="generic name" value="Trimipramine"/>
</dbReference>
<dbReference type="DrugBank" id="DB09068">
    <property type="generic name" value="Vortioxetine"/>
</dbReference>
<dbReference type="DrugBank" id="DB13781">
    <property type="generic name" value="Xamoterol"/>
</dbReference>
<dbReference type="DrugCentral" id="P08588"/>
<dbReference type="GuidetoPHARMACOLOGY" id="28"/>
<dbReference type="TCDB" id="9.A.14.3.11">
    <property type="family name" value="the g-protein-coupled receptor (gpcr) family"/>
</dbReference>
<dbReference type="GlyCosmos" id="P08588">
    <property type="glycosylation" value="1 site, No reported glycans"/>
</dbReference>
<dbReference type="GlyGen" id="P08588">
    <property type="glycosylation" value="6 sites"/>
</dbReference>
<dbReference type="iPTMnet" id="P08588"/>
<dbReference type="PhosphoSitePlus" id="P08588"/>
<dbReference type="SwissPalm" id="P08588"/>
<dbReference type="BioMuta" id="ADRB1"/>
<dbReference type="DMDM" id="48429211"/>
<dbReference type="jPOST" id="P08588"/>
<dbReference type="PaxDb" id="9606-ENSP00000358301"/>
<dbReference type="PeptideAtlas" id="P08588"/>
<dbReference type="ABCD" id="P08588">
    <property type="antibodies" value="1 sequenced antibody"/>
</dbReference>
<dbReference type="Antibodypedia" id="31906">
    <property type="antibodies" value="258 antibodies from 36 providers"/>
</dbReference>
<dbReference type="DNASU" id="153"/>
<dbReference type="Ensembl" id="ENST00000369295.4">
    <property type="protein sequence ID" value="ENSP00000358301.2"/>
    <property type="gene ID" value="ENSG00000043591.6"/>
</dbReference>
<dbReference type="GeneID" id="153"/>
<dbReference type="KEGG" id="hsa:153"/>
<dbReference type="MANE-Select" id="ENST00000369295.4">
    <property type="protein sequence ID" value="ENSP00000358301.2"/>
    <property type="RefSeq nucleotide sequence ID" value="NM_000684.3"/>
    <property type="RefSeq protein sequence ID" value="NP_000675.1"/>
</dbReference>
<dbReference type="UCSC" id="uc001lba.4">
    <property type="organism name" value="human"/>
</dbReference>
<dbReference type="AGR" id="HGNC:285"/>
<dbReference type="CTD" id="153"/>
<dbReference type="DisGeNET" id="153"/>
<dbReference type="GeneCards" id="ADRB1"/>
<dbReference type="HGNC" id="HGNC:285">
    <property type="gene designation" value="ADRB1"/>
</dbReference>
<dbReference type="HPA" id="ENSG00000043591">
    <property type="expression patterns" value="Tissue enhanced (heart muscle, lung, placenta)"/>
</dbReference>
<dbReference type="MalaCards" id="ADRB1"/>
<dbReference type="MIM" id="109630">
    <property type="type" value="gene"/>
</dbReference>
<dbReference type="MIM" id="607276">
    <property type="type" value="phenotype"/>
</dbReference>
<dbReference type="neXtProt" id="NX_P08588"/>
<dbReference type="OpenTargets" id="ENSG00000043591"/>
<dbReference type="PharmGKB" id="PA38"/>
<dbReference type="VEuPathDB" id="HostDB:ENSG00000043591"/>
<dbReference type="eggNOG" id="KOG3656">
    <property type="taxonomic scope" value="Eukaryota"/>
</dbReference>
<dbReference type="GeneTree" id="ENSGT00940000161953"/>
<dbReference type="HOGENOM" id="CLU_009579_11_0_1"/>
<dbReference type="InParanoid" id="P08588"/>
<dbReference type="OMA" id="AGTWSDC"/>
<dbReference type="OrthoDB" id="5975661at2759"/>
<dbReference type="PAN-GO" id="P08588">
    <property type="GO annotations" value="5 GO annotations based on evolutionary models"/>
</dbReference>
<dbReference type="PhylomeDB" id="P08588"/>
<dbReference type="TreeFam" id="TF316350"/>
<dbReference type="PathwayCommons" id="P08588"/>
<dbReference type="Reactome" id="R-HSA-390696">
    <property type="pathway name" value="Adrenoceptors"/>
</dbReference>
<dbReference type="Reactome" id="R-HSA-418555">
    <property type="pathway name" value="G alpha (s) signalling events"/>
</dbReference>
<dbReference type="SignaLink" id="P08588"/>
<dbReference type="SIGNOR" id="P08588"/>
<dbReference type="BioGRID-ORCS" id="153">
    <property type="hits" value="13 hits in 1154 CRISPR screens"/>
</dbReference>
<dbReference type="EvolutionaryTrace" id="P08588"/>
<dbReference type="GeneWiki" id="Beta-1_adrenergic_receptor"/>
<dbReference type="GenomeRNAi" id="153"/>
<dbReference type="Pharos" id="P08588">
    <property type="development level" value="Tclin"/>
</dbReference>
<dbReference type="PRO" id="PR:P08588"/>
<dbReference type="Proteomes" id="UP000005640">
    <property type="component" value="Chromosome 10"/>
</dbReference>
<dbReference type="RNAct" id="P08588">
    <property type="molecule type" value="protein"/>
</dbReference>
<dbReference type="Bgee" id="ENSG00000043591">
    <property type="expression patterns" value="Expressed in heart right ventricle and 140 other cell types or tissues"/>
</dbReference>
<dbReference type="GO" id="GO:0005769">
    <property type="term" value="C:early endosome"/>
    <property type="evidence" value="ECO:0000314"/>
    <property type="project" value="UniProtKB"/>
</dbReference>
<dbReference type="GO" id="GO:0098992">
    <property type="term" value="C:neuronal dense core vesicle"/>
    <property type="evidence" value="ECO:0007669"/>
    <property type="project" value="Ensembl"/>
</dbReference>
<dbReference type="GO" id="GO:0005886">
    <property type="term" value="C:plasma membrane"/>
    <property type="evidence" value="ECO:0000314"/>
    <property type="project" value="UniProtKB"/>
</dbReference>
<dbReference type="GO" id="GO:0098685">
    <property type="term" value="C:Schaffer collateral - CA1 synapse"/>
    <property type="evidence" value="ECO:0007669"/>
    <property type="project" value="Ensembl"/>
</dbReference>
<dbReference type="GO" id="GO:0031694">
    <property type="term" value="F:alpha-2A adrenergic receptor binding"/>
    <property type="evidence" value="ECO:0000353"/>
    <property type="project" value="BHF-UCL"/>
</dbReference>
<dbReference type="GO" id="GO:0004939">
    <property type="term" value="F:beta-adrenergic receptor activity"/>
    <property type="evidence" value="ECO:0000304"/>
    <property type="project" value="ProtInc"/>
</dbReference>
<dbReference type="GO" id="GO:0004940">
    <property type="term" value="F:beta1-adrenergic receptor activity"/>
    <property type="evidence" value="ECO:0000314"/>
    <property type="project" value="UniProtKB"/>
</dbReference>
<dbReference type="GO" id="GO:0099579">
    <property type="term" value="F:G protein-coupled neurotransmitter receptor activity involved in regulation of postsynaptic membrane potential"/>
    <property type="evidence" value="ECO:0007669"/>
    <property type="project" value="Ensembl"/>
</dbReference>
<dbReference type="GO" id="GO:0030165">
    <property type="term" value="F:PDZ domain binding"/>
    <property type="evidence" value="ECO:0000353"/>
    <property type="project" value="UniProtKB"/>
</dbReference>
<dbReference type="GO" id="GO:0046982">
    <property type="term" value="F:protein heterodimerization activity"/>
    <property type="evidence" value="ECO:0000353"/>
    <property type="project" value="BHF-UCL"/>
</dbReference>
<dbReference type="GO" id="GO:0071880">
    <property type="term" value="P:adenylate cyclase-activating adrenergic receptor signaling pathway"/>
    <property type="evidence" value="ECO:0000314"/>
    <property type="project" value="UniProtKB"/>
</dbReference>
<dbReference type="GO" id="GO:0050873">
    <property type="term" value="P:brown fat cell differentiation"/>
    <property type="evidence" value="ECO:0007669"/>
    <property type="project" value="Ensembl"/>
</dbReference>
<dbReference type="GO" id="GO:0002024">
    <property type="term" value="P:diet induced thermogenesis"/>
    <property type="evidence" value="ECO:0007669"/>
    <property type="project" value="Ensembl"/>
</dbReference>
<dbReference type="GO" id="GO:0042596">
    <property type="term" value="P:fear response"/>
    <property type="evidence" value="ECO:0007669"/>
    <property type="project" value="Ensembl"/>
</dbReference>
<dbReference type="GO" id="GO:0031649">
    <property type="term" value="P:heat generation"/>
    <property type="evidence" value="ECO:0007669"/>
    <property type="project" value="Ensembl"/>
</dbReference>
<dbReference type="GO" id="GO:0040015">
    <property type="term" value="P:negative regulation of multicellular organism growth"/>
    <property type="evidence" value="ECO:0007669"/>
    <property type="project" value="Ensembl"/>
</dbReference>
<dbReference type="GO" id="GO:0002025">
    <property type="term" value="P:norepinephrine-epinephrine-mediated vasodilation involved in regulation of systemic arterial blood pressure"/>
    <property type="evidence" value="ECO:0000318"/>
    <property type="project" value="GO_Central"/>
</dbReference>
<dbReference type="GO" id="GO:0120162">
    <property type="term" value="P:positive regulation of cold-induced thermogenesis"/>
    <property type="evidence" value="ECO:0000250"/>
    <property type="project" value="YuBioLab"/>
</dbReference>
<dbReference type="GO" id="GO:0001996">
    <property type="term" value="P:positive regulation of heart rate by epinephrine-norepinephrine"/>
    <property type="evidence" value="ECO:0007669"/>
    <property type="project" value="Ensembl"/>
</dbReference>
<dbReference type="GO" id="GO:0043410">
    <property type="term" value="P:positive regulation of MAPK cascade"/>
    <property type="evidence" value="ECO:0000318"/>
    <property type="project" value="GO_Central"/>
</dbReference>
<dbReference type="GO" id="GO:0001997">
    <property type="term" value="P:positive regulation of the force of heart contraction by epinephrine-norepinephrine"/>
    <property type="evidence" value="ECO:0007669"/>
    <property type="project" value="Ensembl"/>
</dbReference>
<dbReference type="GO" id="GO:0045187">
    <property type="term" value="P:regulation of circadian sleep/wake cycle, sleep"/>
    <property type="evidence" value="ECO:0000315"/>
    <property type="project" value="UniProtKB"/>
</dbReference>
<dbReference type="GO" id="GO:0009409">
    <property type="term" value="P:response to cold"/>
    <property type="evidence" value="ECO:0007669"/>
    <property type="project" value="Ensembl"/>
</dbReference>
<dbReference type="CDD" id="cd15958">
    <property type="entry name" value="7tmA_Beta1_AR"/>
    <property type="match status" value="1"/>
</dbReference>
<dbReference type="FunFam" id="1.20.1070.10:FF:001045">
    <property type="entry name" value="Beta-1 adrenergic receptor"/>
    <property type="match status" value="1"/>
</dbReference>
<dbReference type="Gene3D" id="1.20.1070.10">
    <property type="entry name" value="Rhodopsin 7-helix transmembrane proteins"/>
    <property type="match status" value="1"/>
</dbReference>
<dbReference type="InterPro" id="IPR002233">
    <property type="entry name" value="ADR_fam"/>
</dbReference>
<dbReference type="InterPro" id="IPR000507">
    <property type="entry name" value="ADRB1_rcpt"/>
</dbReference>
<dbReference type="InterPro" id="IPR000276">
    <property type="entry name" value="GPCR_Rhodpsn"/>
</dbReference>
<dbReference type="InterPro" id="IPR017452">
    <property type="entry name" value="GPCR_Rhodpsn_7TM"/>
</dbReference>
<dbReference type="PANTHER" id="PTHR24248">
    <property type="entry name" value="ADRENERGIC RECEPTOR-RELATED G-PROTEIN COUPLED RECEPTOR"/>
    <property type="match status" value="1"/>
</dbReference>
<dbReference type="PANTHER" id="PTHR24248:SF54">
    <property type="entry name" value="BETA-1 ADRENERGIC RECEPTOR"/>
    <property type="match status" value="1"/>
</dbReference>
<dbReference type="Pfam" id="PF00001">
    <property type="entry name" value="7tm_1"/>
    <property type="match status" value="1"/>
</dbReference>
<dbReference type="PRINTS" id="PR01103">
    <property type="entry name" value="ADRENERGICR"/>
</dbReference>
<dbReference type="PRINTS" id="PR00561">
    <property type="entry name" value="ADRENRGCB1AR"/>
</dbReference>
<dbReference type="PRINTS" id="PR00237">
    <property type="entry name" value="GPCRRHODOPSN"/>
</dbReference>
<dbReference type="SMART" id="SM01381">
    <property type="entry name" value="7TM_GPCR_Srsx"/>
    <property type="match status" value="1"/>
</dbReference>
<dbReference type="SUPFAM" id="SSF81321">
    <property type="entry name" value="Family A G protein-coupled receptor-like"/>
    <property type="match status" value="1"/>
</dbReference>
<dbReference type="PROSITE" id="PS00237">
    <property type="entry name" value="G_PROTEIN_RECEP_F1_1"/>
    <property type="match status" value="1"/>
</dbReference>
<dbReference type="PROSITE" id="PS50262">
    <property type="entry name" value="G_PROTEIN_RECEP_F1_2"/>
    <property type="match status" value="1"/>
</dbReference>
<keyword id="KW-0002">3D-structure</keyword>
<keyword id="KW-1003">Cell membrane</keyword>
<keyword id="KW-1015">Disulfide bond</keyword>
<keyword id="KW-0967">Endosome</keyword>
<keyword id="KW-0297">G-protein coupled receptor</keyword>
<keyword id="KW-0325">Glycoprotein</keyword>
<keyword id="KW-0449">Lipoprotein</keyword>
<keyword id="KW-0472">Membrane</keyword>
<keyword id="KW-0564">Palmitate</keyword>
<keyword id="KW-0597">Phosphoprotein</keyword>
<keyword id="KW-1267">Proteomics identification</keyword>
<keyword id="KW-0675">Receptor</keyword>
<keyword id="KW-1185">Reference proteome</keyword>
<keyword id="KW-0807">Transducer</keyword>
<keyword id="KW-0812">Transmembrane</keyword>
<keyword id="KW-1133">Transmembrane helix</keyword>
<reference key="1">
    <citation type="journal article" date="1987" name="Proc. Natl. Acad. Sci. U.S.A.">
        <title>Cloning of the cDNA for the human beta 1-adrenergic receptor.</title>
        <authorList>
            <person name="Frielle T."/>
            <person name="Collins S."/>
            <person name="Daniel K.W."/>
            <person name="Caron M.G."/>
            <person name="Lefkowitz R.J."/>
            <person name="Kobilka B.K."/>
        </authorList>
    </citation>
    <scope>NUCLEOTIDE SEQUENCE [MRNA]</scope>
    <source>
        <tissue>Placenta</tissue>
    </source>
</reference>
<reference key="2">
    <citation type="journal article" date="1999" name="Hum. Mutat.">
        <title>Racial differences in the frequencies of cardiac beta(1)-adrenergic receptor polymorphisms: analysis of c145A&gt;G and c1165G&gt;C.</title>
        <authorList>
            <person name="Moore J.D."/>
            <person name="Mason D.A."/>
            <person name="Green S.A."/>
            <person name="Hsu J."/>
            <person name="Liggett S.B."/>
        </authorList>
    </citation>
    <scope>NUCLEOTIDE SEQUENCE [GENOMIC DNA]</scope>
    <scope>VARIANT GLY-49</scope>
</reference>
<reference key="3">
    <citation type="submission" date="2004-03" db="EMBL/GenBank/DDBJ databases">
        <authorList>
            <consortium name="SeattleSNPs variation discovery resource"/>
        </authorList>
    </citation>
    <scope>NUCLEOTIDE SEQUENCE [GENOMIC DNA]</scope>
    <scope>VARIANT GLY-49</scope>
</reference>
<reference key="4">
    <citation type="submission" date="2007-12" db="EMBL/GenBank/DDBJ databases">
        <authorList>
            <consortium name="NHLBI resequencing and genotyping service (RS&amp;G)"/>
        </authorList>
    </citation>
    <scope>NUCLEOTIDE SEQUENCE [GENOMIC DNA]</scope>
</reference>
<reference key="5">
    <citation type="journal article" date="2004" name="Nature">
        <title>The DNA sequence and comparative analysis of human chromosome 10.</title>
        <authorList>
            <person name="Deloukas P."/>
            <person name="Earthrowl M.E."/>
            <person name="Grafham D.V."/>
            <person name="Rubenfield M."/>
            <person name="French L."/>
            <person name="Steward C.A."/>
            <person name="Sims S.K."/>
            <person name="Jones M.C."/>
            <person name="Searle S."/>
            <person name="Scott C."/>
            <person name="Howe K."/>
            <person name="Hunt S.E."/>
            <person name="Andrews T.D."/>
            <person name="Gilbert J.G.R."/>
            <person name="Swarbreck D."/>
            <person name="Ashurst J.L."/>
            <person name="Taylor A."/>
            <person name="Battles J."/>
            <person name="Bird C.P."/>
            <person name="Ainscough R."/>
            <person name="Almeida J.P."/>
            <person name="Ashwell R.I.S."/>
            <person name="Ambrose K.D."/>
            <person name="Babbage A.K."/>
            <person name="Bagguley C.L."/>
            <person name="Bailey J."/>
            <person name="Banerjee R."/>
            <person name="Bates K."/>
            <person name="Beasley H."/>
            <person name="Bray-Allen S."/>
            <person name="Brown A.J."/>
            <person name="Brown J.Y."/>
            <person name="Burford D.C."/>
            <person name="Burrill W."/>
            <person name="Burton J."/>
            <person name="Cahill P."/>
            <person name="Camire D."/>
            <person name="Carter N.P."/>
            <person name="Chapman J.C."/>
            <person name="Clark S.Y."/>
            <person name="Clarke G."/>
            <person name="Clee C.M."/>
            <person name="Clegg S."/>
            <person name="Corby N."/>
            <person name="Coulson A."/>
            <person name="Dhami P."/>
            <person name="Dutta I."/>
            <person name="Dunn M."/>
            <person name="Faulkner L."/>
            <person name="Frankish A."/>
            <person name="Frankland J.A."/>
            <person name="Garner P."/>
            <person name="Garnett J."/>
            <person name="Gribble S."/>
            <person name="Griffiths C."/>
            <person name="Grocock R."/>
            <person name="Gustafson E."/>
            <person name="Hammond S."/>
            <person name="Harley J.L."/>
            <person name="Hart E."/>
            <person name="Heath P.D."/>
            <person name="Ho T.P."/>
            <person name="Hopkins B."/>
            <person name="Horne J."/>
            <person name="Howden P.J."/>
            <person name="Huckle E."/>
            <person name="Hynds C."/>
            <person name="Johnson C."/>
            <person name="Johnson D."/>
            <person name="Kana A."/>
            <person name="Kay M."/>
            <person name="Kimberley A.M."/>
            <person name="Kershaw J.K."/>
            <person name="Kokkinaki M."/>
            <person name="Laird G.K."/>
            <person name="Lawlor S."/>
            <person name="Lee H.M."/>
            <person name="Leongamornlert D.A."/>
            <person name="Laird G."/>
            <person name="Lloyd C."/>
            <person name="Lloyd D.M."/>
            <person name="Loveland J."/>
            <person name="Lovell J."/>
            <person name="McLaren S."/>
            <person name="McLay K.E."/>
            <person name="McMurray A."/>
            <person name="Mashreghi-Mohammadi M."/>
            <person name="Matthews L."/>
            <person name="Milne S."/>
            <person name="Nickerson T."/>
            <person name="Nguyen M."/>
            <person name="Overton-Larty E."/>
            <person name="Palmer S.A."/>
            <person name="Pearce A.V."/>
            <person name="Peck A.I."/>
            <person name="Pelan S."/>
            <person name="Phillimore B."/>
            <person name="Porter K."/>
            <person name="Rice C.M."/>
            <person name="Rogosin A."/>
            <person name="Ross M.T."/>
            <person name="Sarafidou T."/>
            <person name="Sehra H.K."/>
            <person name="Shownkeen R."/>
            <person name="Skuce C.D."/>
            <person name="Smith M."/>
            <person name="Standring L."/>
            <person name="Sycamore N."/>
            <person name="Tester J."/>
            <person name="Thorpe A."/>
            <person name="Torcasso W."/>
            <person name="Tracey A."/>
            <person name="Tromans A."/>
            <person name="Tsolas J."/>
            <person name="Wall M."/>
            <person name="Walsh J."/>
            <person name="Wang H."/>
            <person name="Weinstock K."/>
            <person name="West A.P."/>
            <person name="Willey D.L."/>
            <person name="Whitehead S.L."/>
            <person name="Wilming L."/>
            <person name="Wray P.W."/>
            <person name="Young L."/>
            <person name="Chen Y."/>
            <person name="Lovering R.C."/>
            <person name="Moschonas N.K."/>
            <person name="Siebert R."/>
            <person name="Fechtel K."/>
            <person name="Bentley D."/>
            <person name="Durbin R.M."/>
            <person name="Hubbard T."/>
            <person name="Doucette-Stamm L."/>
            <person name="Beck S."/>
            <person name="Smith D.R."/>
            <person name="Rogers J."/>
        </authorList>
    </citation>
    <scope>NUCLEOTIDE SEQUENCE [LARGE SCALE GENOMIC DNA]</scope>
</reference>
<reference key="6">
    <citation type="journal article" date="2002" name="Mol. Cell. Biol.">
        <title>Direct binding of the beta1 adrenergic receptor to the cyclic AMP-dependent guanine nucleotide exchange factor CNrasGEF leads to Ras activation.</title>
        <authorList>
            <person name="Pak Y."/>
            <person name="Pham N."/>
            <person name="Rotin D."/>
        </authorList>
    </citation>
    <scope>FUNCTION</scope>
    <scope>INTERACTION WITH RAPGEF2</scope>
    <scope>MUTAGENESIS OF SER-475 AND VAL-477</scope>
</reference>
<reference key="7">
    <citation type="journal article" date="2004" name="J. Biol. Chem.">
        <title>Interaction with cystic fibrosis transmembrane conductance regulator-associated ligand (CAL) inhibits beta1-adrenergic receptor surface expression.</title>
        <authorList>
            <person name="He J."/>
            <person name="Bellini M."/>
            <person name="Xu J."/>
            <person name="Castleberry A.M."/>
            <person name="Hall R.A."/>
        </authorList>
    </citation>
    <scope>INTERACTION WITH GOPC AND DLG4</scope>
    <scope>MUTAGENESIS OF GLU-474; SER-475; LYS-476 AND VAL-477</scope>
    <scope>SUBCELLULAR LOCATION</scope>
</reference>
<reference key="8">
    <citation type="journal article" date="2011" name="J. Biol. Chem.">
        <title>Down-modulation of the G-protein-coupled estrogen receptor, GPER, from the cell surface occurs via a trans-Golgi-proteasome pathway.</title>
        <authorList>
            <person name="Cheng S.B."/>
            <person name="Quinn J.A."/>
            <person name="Graeber C.T."/>
            <person name="Filardo E.J."/>
        </authorList>
    </citation>
    <scope>SUBCELLULAR LOCATION</scope>
</reference>
<reference key="9">
    <citation type="journal article" date="1999" name="J. Biol. Chem.">
        <title>A gain-of-function polymorphism in a G-protein coupling domain of the human beta1-adrenergic receptor.</title>
        <authorList>
            <person name="Mason D.A."/>
            <person name="Moore J.D."/>
            <person name="Green S.A."/>
            <person name="Liggett S.B."/>
        </authorList>
    </citation>
    <scope>VARIANT ARG-389</scope>
    <scope>CHARACTERIZATION OF VARIANT ARG-389</scope>
</reference>
<reference key="10">
    <citation type="journal article" date="2000" name="Eur. Heart J.">
        <title>A novel polymorphism in the gene coding for the beta(1)-adrenergic receptor associated with survival in patients with heart failure.</title>
        <authorList>
            <person name="Borjesson M."/>
            <person name="Magnusson Y."/>
            <person name="Hjalmarson A."/>
            <person name="Andersson B."/>
        </authorList>
    </citation>
    <scope>VARIANT GLY-49</scope>
</reference>
<reference key="11">
    <citation type="journal article" date="2002" name="Am. J. Hum. Genet.">
        <title>A polymorphism in the beta1 adrenergic receptor is associated with resting heart rate.</title>
        <authorList>
            <person name="Ranade K."/>
            <person name="Jorgenson E."/>
            <person name="Sheu W.H.-H."/>
            <person name="Pei D."/>
            <person name="Hsiung C.A."/>
            <person name="Chiang F.-T."/>
            <person name="Chen Y.-D.I."/>
            <person name="Pratt R."/>
            <person name="Olshen R.A."/>
            <person name="Curb D."/>
            <person name="Cox D.R."/>
            <person name="Botstein D."/>
            <person name="Risch N."/>
        </authorList>
    </citation>
    <scope>VARIANT GLY-49</scope>
    <scope>POLYMORPHISM</scope>
</reference>
<reference key="12">
    <citation type="journal article" date="2019" name="Neuron">
        <title>A rare mutation of beta1-adrenergic receptor affects sleep/wake behaviors.</title>
        <authorList>
            <person name="Shi G."/>
            <person name="Xing L."/>
            <person name="Wu D."/>
            <person name="Bhattacharyya B.J."/>
            <person name="Jones C.R."/>
            <person name="McMahon T."/>
            <person name="Chong S.Y.C."/>
            <person name="Chen J.A."/>
            <person name="Coppola G."/>
            <person name="Geschwind D."/>
            <person name="Krystal A."/>
            <person name="Ptacek L.J."/>
            <person name="Fu Y.H."/>
        </authorList>
    </citation>
    <scope>VARIANT VAL-187</scope>
    <scope>CHARACTERIZATION OF VARIANT VAL-187</scope>
    <scope>FUNCTION</scope>
    <scope>POLYMORPHISM</scope>
</reference>
<evidence type="ECO:0000250" key="1"/>
<evidence type="ECO:0000250" key="2">
    <source>
        <dbReference type="UniProtKB" id="P18090"/>
    </source>
</evidence>
<evidence type="ECO:0000255" key="3"/>
<evidence type="ECO:0000255" key="4">
    <source>
        <dbReference type="PROSITE-ProRule" id="PRU00521"/>
    </source>
</evidence>
<evidence type="ECO:0000256" key="5">
    <source>
        <dbReference type="SAM" id="MobiDB-lite"/>
    </source>
</evidence>
<evidence type="ECO:0000269" key="6">
    <source>
    </source>
</evidence>
<evidence type="ECO:0000269" key="7">
    <source>
    </source>
</evidence>
<evidence type="ECO:0000269" key="8">
    <source>
    </source>
</evidence>
<evidence type="ECO:0000269" key="9">
    <source>
    </source>
</evidence>
<evidence type="ECO:0000269" key="10">
    <source>
    </source>
</evidence>
<evidence type="ECO:0000269" key="11">
    <source>
    </source>
</evidence>
<evidence type="ECO:0000269" key="12">
    <source>
    </source>
</evidence>
<evidence type="ECO:0000269" key="13">
    <source ref="3"/>
</evidence>
<evidence type="ECO:0000305" key="14"/>
<evidence type="ECO:0000312" key="15">
    <source>
        <dbReference type="HGNC" id="HGNC:285"/>
    </source>
</evidence>
<evidence type="ECO:0007829" key="16">
    <source>
        <dbReference type="PDB" id="2LSQ"/>
    </source>
</evidence>
<evidence type="ECO:0007829" key="17">
    <source>
        <dbReference type="PDB" id="7BVQ"/>
    </source>
</evidence>
<comment type="function">
    <text evidence="10 12">Beta-adrenergic receptors mediate the catecholamine-induced activation of adenylate cyclase through the action of G proteins. This receptor binds epinephrine and norepinephrine with approximately equal affinity. Mediates Ras activation through G(s)-alpha- and cAMP-mediated signaling. Involved in the regulation of sleep/wake behaviors (PubMed:31473062).</text>
</comment>
<comment type="subunit">
    <text evidence="10 11">Interacts (via C-terminus PDZ motif) with RAPGEF2; the interaction is direct. Interacts with GOPC, MAGI3 and DLG4.</text>
</comment>
<comment type="interaction">
    <interactant intactId="EBI-991009">
        <id>P08588</id>
    </interactant>
    <interactant intactId="EBI-2903663">
        <id>P30542</id>
        <label>ADORA1</label>
    </interactant>
    <organismsDiffer>false</organismsDiffer>
    <experiments>5</experiments>
</comment>
<comment type="interaction">
    <interactant intactId="EBI-991009">
        <id>P08588</id>
    </interactant>
    <interactant intactId="EBI-311035">
        <id>Q86UL8</id>
        <label>MAGI2</label>
    </interactant>
    <organismsDiffer>false</organismsDiffer>
    <experiments>3</experiments>
</comment>
<comment type="interaction">
    <interactant intactId="EBI-991009">
        <id>P08588</id>
    </interactant>
    <interactant intactId="EBI-310506">
        <id>Q5TCQ9</id>
        <label>MAGI3</label>
    </interactant>
    <organismsDiffer>false</organismsDiffer>
    <experiments>5</experiments>
</comment>
<comment type="interaction">
    <interactant intactId="EBI-991009">
        <id>P08588</id>
    </interactant>
    <interactant intactId="EBI-375655">
        <id>P31016</id>
        <label>Dlg4</label>
    </interactant>
    <organismsDiffer>true</organismsDiffer>
    <experiments>2</experiments>
</comment>
<comment type="interaction">
    <interactant intactId="EBI-991009">
        <id>P08588</id>
    </interactant>
    <interactant intactId="EBI-8333209">
        <id>P14270</id>
        <label>Pde4d</label>
    </interactant>
    <organismsDiffer>true</organismsDiffer>
    <experiments>2</experiments>
</comment>
<comment type="subcellular location">
    <subcellularLocation>
        <location evidence="2">Cell membrane</location>
        <topology evidence="2">Multi-pass membrane protein</topology>
    </subcellularLocation>
    <subcellularLocation>
        <location>Early endosome</location>
    </subcellularLocation>
    <text evidence="1">Colocalizes with RAPGEF2 at the plasma membrane (By similarity). Localized at the plasma membrane. Found in the Golgi upon GOPC overexpression.</text>
</comment>
<comment type="domain">
    <text>The PDZ domain-binding motif mediates competitive interactions with GOPC, MAGI3 and DLG4 and plays a role in subcellular location of the receptor.</text>
</comment>
<comment type="PTM">
    <text>Homologous desensitization of the receptor is mediated by its phosphorylation by beta-adrenergic receptor kinase.</text>
</comment>
<comment type="polymorphism">
    <text evidence="9">Genetic variations in ADRB1 are associated with inter-individual variability in the resting heart rate. This quantitative trait has been significantly correlated with cardiovascular morbidity and mortality [MIM:607276].</text>
</comment>
<comment type="polymorphism">
    <text evidence="12">Genetic variations in ADRB1 are associated with the familial natural short sleep 2 (FNSS2) phenotype, an autosomal dominant trait [MIM:618591]. Individuals with this trait require less sleep in any 24-hour period than is typical for their age group.</text>
</comment>
<comment type="similarity">
    <text evidence="4">Belongs to the G-protein coupled receptor 1 family. Adrenergic receptor subfamily. ADRB1 sub-subfamily.</text>
</comment>
<name>ADRB1_HUMAN</name>
<proteinExistence type="evidence at protein level"/>
<feature type="chain" id="PRO_0000069118" description="Beta-1 adrenergic receptor">
    <location>
        <begin position="1"/>
        <end position="477"/>
    </location>
</feature>
<feature type="topological domain" description="Extracellular" evidence="1">
    <location>
        <begin position="1"/>
        <end position="55"/>
    </location>
</feature>
<feature type="transmembrane region" description="Helical; Name=1" evidence="1">
    <location>
        <begin position="56"/>
        <end position="84"/>
    </location>
</feature>
<feature type="topological domain" description="Cytoplasmic" evidence="1">
    <location>
        <begin position="85"/>
        <end position="93"/>
    </location>
</feature>
<feature type="transmembrane region" description="Helical; Name=2" evidence="1">
    <location>
        <begin position="94"/>
        <end position="120"/>
    </location>
</feature>
<feature type="topological domain" description="Extracellular" evidence="1">
    <location>
        <begin position="121"/>
        <end position="132"/>
    </location>
</feature>
<feature type="transmembrane region" description="Helical; Name=3" evidence="1">
    <location>
        <begin position="133"/>
        <end position="154"/>
    </location>
</feature>
<feature type="topological domain" description="Cytoplasmic" evidence="1">
    <location>
        <begin position="155"/>
        <end position="172"/>
    </location>
</feature>
<feature type="transmembrane region" description="Helical; Name=4" evidence="1">
    <location>
        <begin position="173"/>
        <end position="196"/>
    </location>
</feature>
<feature type="topological domain" description="Extracellular" evidence="1">
    <location>
        <begin position="197"/>
        <end position="222"/>
    </location>
</feature>
<feature type="transmembrane region" description="Helical; Name=5" evidence="1">
    <location>
        <begin position="223"/>
        <end position="248"/>
    </location>
</feature>
<feature type="topological domain" description="Cytoplasmic" evidence="1">
    <location>
        <begin position="249"/>
        <end position="319"/>
    </location>
</feature>
<feature type="transmembrane region" description="Helical; Name=6" evidence="1">
    <location>
        <begin position="320"/>
        <end position="349"/>
    </location>
</feature>
<feature type="topological domain" description="Extracellular" evidence="1">
    <location>
        <begin position="350"/>
        <end position="354"/>
    </location>
</feature>
<feature type="transmembrane region" description="Helical; Name=7" evidence="1">
    <location>
        <begin position="355"/>
        <end position="377"/>
    </location>
</feature>
<feature type="topological domain" description="Cytoplasmic" evidence="1">
    <location>
        <begin position="378"/>
        <end position="477"/>
    </location>
</feature>
<feature type="region of interest" description="Disordered" evidence="5">
    <location>
        <begin position="269"/>
        <end position="307"/>
    </location>
</feature>
<feature type="region of interest" description="Disordered" evidence="5">
    <location>
        <begin position="403"/>
        <end position="477"/>
    </location>
</feature>
<feature type="short sequence motif" description="PDZ-Binding">
    <location>
        <begin position="474"/>
        <end position="477"/>
    </location>
</feature>
<feature type="compositionally biased region" description="Pro residues" evidence="5">
    <location>
        <begin position="270"/>
        <end position="292"/>
    </location>
</feature>
<feature type="compositionally biased region" description="Low complexity" evidence="5">
    <location>
        <begin position="293"/>
        <end position="305"/>
    </location>
</feature>
<feature type="modified residue" description="Phosphoserine; by PKA" evidence="3">
    <location>
        <position position="312"/>
    </location>
</feature>
<feature type="modified residue" description="Phosphoserine; by PKA" evidence="3">
    <location>
        <position position="412"/>
    </location>
</feature>
<feature type="modified residue" description="Phosphoserine" evidence="2">
    <location>
        <position position="428"/>
    </location>
</feature>
<feature type="lipid moiety-binding region" description="S-palmitoyl cysteine" evidence="1">
    <location>
        <position position="392"/>
    </location>
</feature>
<feature type="glycosylation site" description="N-linked (GlcNAc...) asparagine" evidence="14">
    <location>
        <position position="15"/>
    </location>
</feature>
<feature type="disulfide bond" evidence="4">
    <location>
        <begin position="131"/>
        <end position="216"/>
    </location>
</feature>
<feature type="disulfide bond" evidence="4">
    <location>
        <begin position="209"/>
        <end position="215"/>
    </location>
</feature>
<feature type="sequence variant" id="VAR_055909" description="In dbSNP:rs34844626.">
    <original>A</original>
    <variation>V</variation>
    <location>
        <position position="26"/>
    </location>
</feature>
<feature type="sequence variant" id="VAR_055910" description="In dbSNP:rs35720093.">
    <original>A</original>
    <variation>T</variation>
    <location>
        <position position="29"/>
    </location>
</feature>
<feature type="sequence variant" id="VAR_055911" description="In dbSNP:rs35230616.">
    <original>R</original>
    <variation>Q</variation>
    <location>
        <position position="31"/>
    </location>
</feature>
<feature type="sequence variant" id="VAR_009879" description="Correlated with low mean resting heart rate and decreased mortality risk in patients with congestive heart failure; dbSNP:rs1801252." evidence="7 8 9 13">
    <original>S</original>
    <variation>G</variation>
    <location>
        <position position="49"/>
    </location>
</feature>
<feature type="sequence variant" id="VAR_082587" description="Found in individuals with short sleep; results in decreased adenylate cyclase-activating adrenergic receptor signaling; decreased protein stability; dbSNP:rs776439595." evidence="12">
    <original>A</original>
    <variation>V</variation>
    <location>
        <position position="187"/>
    </location>
</feature>
<feature type="sequence variant" id="VAR_009880" description="Increased beta1-adrenergic receptor activity; increased basal activity and increased coupling to heterotrimeric G protein Gs that stimulates the adenylyl cyclase; dbSNP:rs1801253." evidence="6">
    <original>G</original>
    <variation>R</variation>
    <location>
        <position position="389"/>
    </location>
</feature>
<feature type="sequence variant" id="VAR_055912" description="In dbSNP:rs36052953.">
    <original>R</original>
    <variation>H</variation>
    <location>
        <position position="399"/>
    </location>
</feature>
<feature type="sequence variant" id="VAR_055913" description="In dbSNP:rs35705839.">
    <original>H</original>
    <variation>Y</variation>
    <location>
        <position position="405"/>
    </location>
</feature>
<feature type="mutagenesis site" description="Loss of interaction with GOPC." evidence="11">
    <original>E</original>
    <variation>A</variation>
    <variation>D</variation>
    <location>
        <position position="474"/>
    </location>
</feature>
<feature type="mutagenesis site" description="Loss of interaction with GOPC; when associated with A-477." evidence="11">
    <original>E</original>
    <variation>K</variation>
    <location>
        <position position="474"/>
    </location>
</feature>
<feature type="mutagenesis site" description="Loss of interaction with GOPC. Loss of interaction with RAPGEF2. Abolishes agonist-induced Ras activation." evidence="10 11">
    <original>S</original>
    <variation>A</variation>
    <location>
        <position position="475"/>
    </location>
</feature>
<feature type="mutagenesis site" description="Loss of interaction with RAPGEF2." evidence="10 11">
    <original>S</original>
    <variation>D</variation>
    <location>
        <position position="475"/>
    </location>
</feature>
<feature type="mutagenesis site" description="Partial loss of interaction with GOPC." evidence="10 11">
    <original>S</original>
    <variation>T</variation>
    <location>
        <position position="475"/>
    </location>
</feature>
<feature type="mutagenesis site" description="Partial loss of interaction with GOPC." evidence="11">
    <original>K</original>
    <variation>A</variation>
    <location>
        <position position="476"/>
    </location>
</feature>
<feature type="mutagenesis site" description="Loss of interaction with GOPC." evidence="10 11">
    <original>V</original>
    <variation>A</variation>
    <variation>F</variation>
    <variation>L</variation>
    <variation>I</variation>
    <variation>M</variation>
    <location>
        <position position="477"/>
    </location>
</feature>
<feature type="mutagenesis site" description="Loss of interaction with RAPGEF2. Abolishes agonist-induced Ras activation." evidence="10 11">
    <original>V</original>
    <variation>A</variation>
    <location>
        <position position="477"/>
    </location>
</feature>
<feature type="helix" evidence="17">
    <location>
        <begin position="54"/>
        <end position="85"/>
    </location>
</feature>
<feature type="helix" evidence="17">
    <location>
        <begin position="87"/>
        <end position="89"/>
    </location>
</feature>
<feature type="helix" evidence="17">
    <location>
        <begin position="92"/>
        <end position="110"/>
    </location>
</feature>
<feature type="helix" evidence="17">
    <location>
        <begin position="112"/>
        <end position="121"/>
    </location>
</feature>
<feature type="helix" evidence="17">
    <location>
        <begin position="127"/>
        <end position="161"/>
    </location>
</feature>
<feature type="helix" evidence="17">
    <location>
        <begin position="163"/>
        <end position="169"/>
    </location>
</feature>
<feature type="helix" evidence="17">
    <location>
        <begin position="172"/>
        <end position="195"/>
    </location>
</feature>
<feature type="turn" evidence="17">
    <location>
        <begin position="196"/>
        <end position="199"/>
    </location>
</feature>
<feature type="helix" evidence="17">
    <location>
        <begin position="204"/>
        <end position="210"/>
    </location>
</feature>
<feature type="helix" evidence="16">
    <location>
        <begin position="213"/>
        <end position="215"/>
    </location>
</feature>
<feature type="helix" evidence="17">
    <location>
        <begin position="222"/>
        <end position="232"/>
    </location>
</feature>
<feature type="helix" evidence="17">
    <location>
        <begin position="234"/>
        <end position="253"/>
    </location>
</feature>
<feature type="helix" evidence="17">
    <location>
        <begin position="316"/>
        <end position="349"/>
    </location>
</feature>
<feature type="helix" evidence="17">
    <location>
        <begin position="351"/>
        <end position="353"/>
    </location>
</feature>
<feature type="helix" evidence="17">
    <location>
        <begin position="356"/>
        <end position="377"/>
    </location>
</feature>
<feature type="helix" evidence="17">
    <location>
        <begin position="381"/>
        <end position="391"/>
    </location>
</feature>